<keyword id="KW-0167">Capsid protein</keyword>
<keyword id="KW-0175">Coiled coil</keyword>
<keyword id="KW-1015">Disulfide bond</keyword>
<keyword id="KW-0348">Hemagglutinin</keyword>
<keyword id="KW-1032">Host cell membrane</keyword>
<keyword id="KW-1035">Host cytoplasm</keyword>
<keyword id="KW-1037">Host cytoskeleton</keyword>
<keyword id="KW-1038">Host endoplasmic reticulum</keyword>
<keyword id="KW-1043">Host membrane</keyword>
<keyword id="KW-0945">Host-virus interaction</keyword>
<keyword id="KW-0472">Membrane</keyword>
<keyword id="KW-1152">Outer capsid protein</keyword>
<keyword id="KW-1161">Viral attachment to host cell</keyword>
<keyword id="KW-1162">Viral penetration into host cytoplasm</keyword>
<keyword id="KW-1173">Viral penetration via permeabilization of host membrane</keyword>
<keyword id="KW-0946">Virion</keyword>
<keyword id="KW-1160">Virus entry into host cell</keyword>
<name>VP4_ROTB5</name>
<accession>P36305</accession>
<reference key="1">
    <citation type="journal article" date="1993" name="J. Gen. Virol.">
        <title>Independent segregation of the VP4 and the VP7 genes in bovine rotaviruses as confirmed by VP4 sequence analysis of G8 and G10 bovine rotavirus strains.</title>
        <authorList>
            <person name="Taniguchi K."/>
            <person name="Urasawa T."/>
            <person name="Urasawa S."/>
        </authorList>
    </citation>
    <scope>NUCLEOTIDE SEQUENCE [GENOMIC RNA]</scope>
</reference>
<evidence type="ECO:0000255" key="1">
    <source>
        <dbReference type="HAMAP-Rule" id="MF_04132"/>
    </source>
</evidence>
<feature type="chain" id="PRO_0000041009" description="Outer capsid protein VP4" evidence="1">
    <location>
        <begin position="1"/>
        <end position="776"/>
    </location>
</feature>
<feature type="chain" id="PRO_0000041010" description="Outer capsid protein VP8*" evidence="1">
    <location>
        <begin position="1"/>
        <end position="231"/>
    </location>
</feature>
<feature type="chain" id="PRO_0000041011" description="Outer capsid protein VP5*" evidence="1">
    <location>
        <begin position="248"/>
        <end position="776"/>
    </location>
</feature>
<feature type="region of interest" description="Spike head" evidence="1">
    <location>
        <begin position="65"/>
        <end position="224"/>
    </location>
</feature>
<feature type="region of interest" description="Spike body and stalk (antigen domain)" evidence="1">
    <location>
        <begin position="248"/>
        <end position="479"/>
    </location>
</feature>
<feature type="region of interest" description="Hydrophobic; possible role in virus entry into host cell" evidence="1">
    <location>
        <begin position="389"/>
        <end position="409"/>
    </location>
</feature>
<feature type="region of interest" description="Spike foot" evidence="1">
    <location>
        <begin position="510"/>
        <end position="776"/>
    </location>
</feature>
<feature type="coiled-coil region" evidence="1">
    <location>
        <begin position="484"/>
        <end position="518"/>
    </location>
</feature>
<feature type="short sequence motif" description="DGE motif; interaction with ITGA2/ITGB1 heterodimer" evidence="1">
    <location>
        <begin position="308"/>
        <end position="310"/>
    </location>
</feature>
<feature type="short sequence motif" description="YGL motif; interaction with ITGA4" evidence="1">
    <location>
        <begin position="448"/>
        <end position="450"/>
    </location>
</feature>
<feature type="short sequence motif" description="KID motif; interaction with HSPA8" evidence="1">
    <location>
        <begin position="644"/>
        <end position="646"/>
    </location>
</feature>
<feature type="site" description="Binding to sialic acid" evidence="1">
    <location>
        <position position="101"/>
    </location>
</feature>
<feature type="site" description="Binding to sialic acid" evidence="1">
    <location>
        <position position="190"/>
    </location>
</feature>
<feature type="site" description="Cleavage" evidence="1">
    <location>
        <begin position="231"/>
        <end position="232"/>
    </location>
</feature>
<feature type="site" description="Cleavage" evidence="1">
    <location>
        <begin position="241"/>
        <end position="242"/>
    </location>
</feature>
<feature type="site" description="Cleavage; associated with enhancement of infectivity" evidence="1">
    <location>
        <begin position="247"/>
        <end position="248"/>
    </location>
</feature>
<feature type="disulfide bond" evidence="1">
    <location>
        <begin position="203"/>
        <end position="216"/>
    </location>
</feature>
<feature type="disulfide bond" evidence="1">
    <location>
        <begin position="318"/>
        <end position="380"/>
    </location>
</feature>
<comment type="function">
    <molecule>Outer capsid protein VP4</molecule>
    <text evidence="1">Spike-forming protein that mediates virion attachment to the host epithelial cell receptors and plays a major role in cell penetration, determination of host range restriction and virulence. Rotavirus attachment and entry into the host cell probably involves multiple sequential contacts between the outer capsid proteins VP4 and VP7, and the cell receptors. It is subsequently lost, together with VP7, following virus entry into the host cell. Following entry into the host cell, low intracellular or intravesicular Ca(2+) concentration probably causes the calcium-stabilized VP7 trimers to dissociate from the virion. This step is probably necessary for the membrane-disrupting entry step and the release of VP4, which is locked onto the virion by VP7. During the virus exit from the host cell, VP4 seems to be required to target the newly formed virions to the host cell lipid rafts.</text>
</comment>
<comment type="function">
    <molecule>Outer capsid protein VP5*</molecule>
    <text evidence="1">Forms the spike 'foot' and 'body' and acts as a membrane permeabilization protein that mediates release of viral particles from endosomal compartments into the cytoplasm. During entry, the part of VP5* that protrudes from the virus folds back on itself and reorganizes from a local dimer to a trimer. This reorganization may be linked to membrane penetration by exposing VP5* hydrophobic region. In integrin-dependent strains, VP5* targets the integrin heterodimer ITGA2/ITGB1 for cell attachment.</text>
</comment>
<comment type="function">
    <molecule>Outer capsid protein VP8*</molecule>
    <text evidence="1">Forms the head of the spikes and mediates the recognition of specific host cell surface glycans. It is the viral hemagglutinin and an important target of neutralizing antibodies. In sialic acid-dependent strains, VP8* binds to host cell sialic acid, most probably a ganglioside, providing the initial contact. In some other strains, VP8* mediates the attachment to histo-blood group antigens (HBGAs) for viral entry.</text>
</comment>
<comment type="subunit">
    <molecule>Outer capsid protein VP4</molecule>
    <text evidence="1">Homotrimer. VP4 adopts a dimeric appearance above the capsid surface, while forming a trimeric base anchored inside the capsid layer. Only hints of the third molecule are observed above the capsid surface. It probably performs a series of molecular rearrangements during viral entry. Prior to trypsin cleavage, it is flexible. The priming trypsin cleavage triggers its rearrangement into rigid spikes with approximate two-fold symmetry of their protruding parts. After an unknown second triggering event, cleaved VP4 may undergo another rearrangement, in which two VP5* subunits fold back on themselves and join a third subunit to form a tightly associated trimer, shaped like a folded umbrella. Interacts with VP6. Interacts with VP7.</text>
</comment>
<comment type="subunit">
    <molecule>Outer capsid protein VP5*</molecule>
    <text evidence="1">Homotrimer. The trimer is coiled-coil stabilized by its C-terminus, however, its N-terminus, known as antigen domain or 'body', seems to be flexible allowing it to self-associate either as a dimer or a trimer.</text>
</comment>
<comment type="subcellular location">
    <molecule>Outer capsid protein VP4</molecule>
    <subcellularLocation>
        <location evidence="1">Virion</location>
    </subcellularLocation>
    <subcellularLocation>
        <location evidence="1">Host rough endoplasmic reticulum</location>
    </subcellularLocation>
    <subcellularLocation>
        <location evidence="1">Host cell membrane</location>
    </subcellularLocation>
    <subcellularLocation>
        <location evidence="1">Host cytoplasm</location>
        <location evidence="1">Host cytoskeleton</location>
    </subcellularLocation>
    <subcellularLocation>
        <location evidence="1">Host endoplasmic reticulum-Golgi intermediate compartment</location>
    </subcellularLocation>
    <text evidence="1">The outer layer contains 180 copies of VP4, grouped as 60 dimers. Immature double-layered particles assembled in the cytoplasm bud across the membrane of the endoplasmic reticulum, acquiring during this process a transient lipid membrane that is modified with the ER resident viral glycoproteins NSP4 and VP7; these enveloped particles also contain VP4. As the particles move towards the interior of the ER cisternae, the transient lipid membrane and the non-structural protein NSP4 are lost, while the virus surface proteins VP4 and VP7 rearrange to form the outermost virus protein layer, yielding mature infectious triple-layered particles. VP4 also seems to associate with lipid rafts of the host cell membrane probably for the exit of the virus from the infected cell by an alternate pathway.</text>
</comment>
<comment type="subcellular location">
    <molecule>Outer capsid protein VP8*</molecule>
    <subcellularLocation>
        <location evidence="1">Virion</location>
    </subcellularLocation>
    <text evidence="1">Outer capsid protein.</text>
</comment>
<comment type="subcellular location">
    <molecule>Outer capsid protein VP5*</molecule>
    <subcellularLocation>
        <location evidence="1">Virion</location>
    </subcellularLocation>
    <text evidence="1">Outer capsid protein.</text>
</comment>
<comment type="domain">
    <molecule>Outer capsid protein VP4</molecule>
    <text evidence="1">The VP4 spike is divided into a foot, a stalk and body, and a head.</text>
</comment>
<comment type="PTM">
    <molecule>Outer capsid protein VP4</molecule>
    <text evidence="1">Proteolytic cleavage by trypsin results in activation of VP4 functions and greatly increases infectivity. The penetration into the host cell is dependent on trypsin treatment of VP4. It produces two peptides, VP5* and VP8* that remain associated with the virion. Cleavage of VP4 by trypsin probably occurs in vivo in the lumen of the intestine prior to infection of enterocytes. Trypsin seems to be incorporated into the three-layered viral particles but remains inactive as long as the viral outer capsid is intact and would only be activated upon the solubilization of the latter.</text>
</comment>
<comment type="miscellaneous">
    <text evidence="1">In group A rotaviruses, VP4 defines the P serotype.</text>
</comment>
<comment type="miscellaneous">
    <text evidence="1">Some rotavirus strains are neuraminidase-sensitive and require sialic acid to attach to the cell surface. Some rotavirus strains are integrin-dependent. Some rotavirus strains depend on ganglioside for their entry into the host cell. Hsp70 also seems to be involved in the entry of some strains.</text>
</comment>
<comment type="miscellaneous">
    <text evidence="1">This strain probably uses sialic acid to attach to the host cell.</text>
</comment>
<comment type="similarity">
    <text evidence="1">Belongs to the rotavirus VP4 family.</text>
</comment>
<sequence length="776" mass="86590">MASLIYRQLLTNSYTVELSDEIQEIGSTKSQSVTINPGPFAQTSYAPVNWGPGETNDSTVVEPVLDGPYQPTTFNPPVSYWMLLTPTDAGVEVEGTNNTNRWLATILIEPNVQSEERTYTLFGQQVQITVSNDSQTKWKLVDVSKQTQDGNFSQHRQLLSTPKLYGVMKHGGKIYTYNGETPNANTGYYSTTNYDSVNMTAYCDFYIIPLAQEAKCTEYINNGLPPIQNTRNVVPVSISSRSIVHTRAKANEDIIVSKTSLWKEMQYNRDIIIRFKFANSIVKSGGLGYKWSEVSFKPANYQYTYTRDGEEVTAHTTCSVNGVNDFNYNGGSLPTDFVISKYEVIKENSCVYIDYWDDSKAFRNMVYVRSLAANLNSVMCPGGDYSFALPVGNYPVMTGGAVSLHSAGVTLSTQFTDFVSLNSLRFRFRLSVEEPSFSIMRTRVSGLYGLPAAKPNNSQEYYEIAGRFSLISLVPSNDDYQTPIMNSVTVRQDLERQLGELRDEFNNLSQQIAMSQLIDLALLPLDMFSMFSGIKSTIDAAKSMATNVMKKFKKSNLANSVSTLTDSLSDAASSVSRSSSVRSLGSTASAWTEVSEVATEVNELTNSISTQTSTISKRLRLKEMATQTDGMNFDDISAAVLKTKIDKSTQINANTLPDIVTEASEKFIPNRTYRVIADDEVLEASTDGRFFAYKVETFEEVPFDVQKFADLVTDSPVISAIIDFKTLKNLNDNYGINKQQALNLLRSDPKVLREFINQNNPIIRNRIENLIMQCRL</sequence>
<proteinExistence type="inferred from homology"/>
<dbReference type="EMBL" id="D13395">
    <property type="status" value="NOT_ANNOTATED_CDS"/>
    <property type="molecule type" value="Genomic_RNA"/>
</dbReference>
<dbReference type="SMR" id="P36305"/>
<dbReference type="GO" id="GO:0044172">
    <property type="term" value="C:host cell endoplasmic reticulum-Golgi intermediate compartment"/>
    <property type="evidence" value="ECO:0007669"/>
    <property type="project" value="UniProtKB-SubCell"/>
</dbReference>
<dbReference type="GO" id="GO:0020002">
    <property type="term" value="C:host cell plasma membrane"/>
    <property type="evidence" value="ECO:0007669"/>
    <property type="project" value="UniProtKB-SubCell"/>
</dbReference>
<dbReference type="GO" id="GO:0044168">
    <property type="term" value="C:host cell rough endoplasmic reticulum"/>
    <property type="evidence" value="ECO:0007669"/>
    <property type="project" value="UniProtKB-SubCell"/>
</dbReference>
<dbReference type="GO" id="GO:0044163">
    <property type="term" value="C:host cytoskeleton"/>
    <property type="evidence" value="ECO:0007669"/>
    <property type="project" value="UniProtKB-SubCell"/>
</dbReference>
<dbReference type="GO" id="GO:0016020">
    <property type="term" value="C:membrane"/>
    <property type="evidence" value="ECO:0007669"/>
    <property type="project" value="UniProtKB-KW"/>
</dbReference>
<dbReference type="GO" id="GO:0039624">
    <property type="term" value="C:viral outer capsid"/>
    <property type="evidence" value="ECO:0007669"/>
    <property type="project" value="UniProtKB-UniRule"/>
</dbReference>
<dbReference type="GO" id="GO:0039665">
    <property type="term" value="P:permeabilization of host organelle membrane involved in viral entry into host cell"/>
    <property type="evidence" value="ECO:0007669"/>
    <property type="project" value="UniProtKB-UniRule"/>
</dbReference>
<dbReference type="GO" id="GO:0019062">
    <property type="term" value="P:virion attachment to host cell"/>
    <property type="evidence" value="ECO:0007669"/>
    <property type="project" value="UniProtKB-UniRule"/>
</dbReference>
<dbReference type="Gene3D" id="1.20.5.170">
    <property type="match status" value="1"/>
</dbReference>
<dbReference type="Gene3D" id="2.60.120.200">
    <property type="match status" value="1"/>
</dbReference>
<dbReference type="HAMAP" id="MF_04132">
    <property type="entry name" value="Rota_A_VP4"/>
    <property type="match status" value="1"/>
</dbReference>
<dbReference type="HAMAP" id="MF_04125">
    <property type="entry name" value="Rota_VP4"/>
    <property type="match status" value="1"/>
</dbReference>
<dbReference type="InterPro" id="IPR013320">
    <property type="entry name" value="ConA-like_dom_sf"/>
</dbReference>
<dbReference type="InterPro" id="IPR042546">
    <property type="entry name" value="Rota_A_VP4"/>
</dbReference>
<dbReference type="InterPro" id="IPR035330">
    <property type="entry name" value="Rota_VP4_MID"/>
</dbReference>
<dbReference type="InterPro" id="IPR038017">
    <property type="entry name" value="Rota_VP4_MID_sf"/>
</dbReference>
<dbReference type="InterPro" id="IPR000416">
    <property type="entry name" value="VP4_concanavalin-like"/>
</dbReference>
<dbReference type="InterPro" id="IPR035329">
    <property type="entry name" value="VP4_helical"/>
</dbReference>
<dbReference type="Pfam" id="PF17477">
    <property type="entry name" value="Rota_VP4_MID"/>
    <property type="match status" value="1"/>
</dbReference>
<dbReference type="Pfam" id="PF00426">
    <property type="entry name" value="VP4_haemagglut"/>
    <property type="match status" value="1"/>
</dbReference>
<dbReference type="Pfam" id="PF17478">
    <property type="entry name" value="VP4_helical"/>
    <property type="match status" value="1"/>
</dbReference>
<dbReference type="SUPFAM" id="SSF49899">
    <property type="entry name" value="Concanavalin A-like lectins/glucanases"/>
    <property type="match status" value="1"/>
</dbReference>
<dbReference type="SUPFAM" id="SSF111379">
    <property type="entry name" value="VP4 membrane interaction domain"/>
    <property type="match status" value="1"/>
</dbReference>
<protein>
    <recommendedName>
        <fullName evidence="1">Outer capsid protein VP4</fullName>
    </recommendedName>
    <alternativeName>
        <fullName evidence="1">Hemagglutinin</fullName>
    </alternativeName>
    <component>
        <recommendedName>
            <fullName evidence="1">Outer capsid protein VP8*</fullName>
        </recommendedName>
    </component>
    <component>
        <recommendedName>
            <fullName evidence="1">Outer capsid protein VP5*</fullName>
        </recommendedName>
    </component>
</protein>
<organism>
    <name type="scientific">Rotavirus A (isolate RVA/Cow/Thailand/A5/1988/G8P6[1])</name>
    <name type="common">RV-A</name>
    <dbReference type="NCBI Taxonomy" id="36440"/>
    <lineage>
        <taxon>Viruses</taxon>
        <taxon>Riboviria</taxon>
        <taxon>Orthornavirae</taxon>
        <taxon>Duplornaviricota</taxon>
        <taxon>Resentoviricetes</taxon>
        <taxon>Reovirales</taxon>
        <taxon>Sedoreoviridae</taxon>
        <taxon>Rotavirus</taxon>
        <taxon>Rotavirus A</taxon>
    </lineage>
</organism>
<organismHost>
    <name type="scientific">Bos taurus</name>
    <name type="common">Bovine</name>
    <dbReference type="NCBI Taxonomy" id="9913"/>
</organismHost>